<proteinExistence type="inferred from homology"/>
<accession>B4RKF2</accession>
<organism>
    <name type="scientific">Neisseria gonorrhoeae (strain NCCP11945)</name>
    <dbReference type="NCBI Taxonomy" id="521006"/>
    <lineage>
        <taxon>Bacteria</taxon>
        <taxon>Pseudomonadati</taxon>
        <taxon>Pseudomonadota</taxon>
        <taxon>Betaproteobacteria</taxon>
        <taxon>Neisseriales</taxon>
        <taxon>Neisseriaceae</taxon>
        <taxon>Neisseria</taxon>
    </lineage>
</organism>
<keyword id="KW-0687">Ribonucleoprotein</keyword>
<keyword id="KW-0689">Ribosomal protein</keyword>
<keyword id="KW-0694">RNA-binding</keyword>
<keyword id="KW-0699">rRNA-binding</keyword>
<feature type="chain" id="PRO_1000142537" description="Large ribosomal subunit protein bL25">
    <location>
        <begin position="1"/>
        <end position="190"/>
    </location>
</feature>
<protein>
    <recommendedName>
        <fullName evidence="1">Large ribosomal subunit protein bL25</fullName>
    </recommendedName>
    <alternativeName>
        <fullName evidence="2">50S ribosomal protein L25</fullName>
    </alternativeName>
    <alternativeName>
        <fullName evidence="1">General stress protein CTC</fullName>
    </alternativeName>
</protein>
<name>RL25_NEIG2</name>
<gene>
    <name evidence="1" type="primary">rplY</name>
    <name evidence="1" type="synonym">ctc</name>
    <name type="ordered locus">NGK_0612</name>
</gene>
<dbReference type="EMBL" id="CP001050">
    <property type="protein sequence ID" value="ACF29303.1"/>
    <property type="molecule type" value="Genomic_DNA"/>
</dbReference>
<dbReference type="RefSeq" id="WP_003687901.1">
    <property type="nucleotide sequence ID" value="NC_011035.1"/>
</dbReference>
<dbReference type="SMR" id="B4RKF2"/>
<dbReference type="KEGG" id="ngk:NGK_0612"/>
<dbReference type="HOGENOM" id="CLU_075939_0_1_4"/>
<dbReference type="Proteomes" id="UP000002564">
    <property type="component" value="Chromosome"/>
</dbReference>
<dbReference type="GO" id="GO:0022625">
    <property type="term" value="C:cytosolic large ribosomal subunit"/>
    <property type="evidence" value="ECO:0007669"/>
    <property type="project" value="TreeGrafter"/>
</dbReference>
<dbReference type="GO" id="GO:0008097">
    <property type="term" value="F:5S rRNA binding"/>
    <property type="evidence" value="ECO:0007669"/>
    <property type="project" value="InterPro"/>
</dbReference>
<dbReference type="GO" id="GO:0003735">
    <property type="term" value="F:structural constituent of ribosome"/>
    <property type="evidence" value="ECO:0007669"/>
    <property type="project" value="InterPro"/>
</dbReference>
<dbReference type="GO" id="GO:0006412">
    <property type="term" value="P:translation"/>
    <property type="evidence" value="ECO:0007669"/>
    <property type="project" value="UniProtKB-UniRule"/>
</dbReference>
<dbReference type="CDD" id="cd00495">
    <property type="entry name" value="Ribosomal_L25_TL5_CTC"/>
    <property type="match status" value="1"/>
</dbReference>
<dbReference type="FunFam" id="2.170.120.20:FF:000003">
    <property type="entry name" value="50S ribosomal protein L25"/>
    <property type="match status" value="1"/>
</dbReference>
<dbReference type="FunFam" id="2.40.240.10:FF:000002">
    <property type="entry name" value="50S ribosomal protein L25"/>
    <property type="match status" value="1"/>
</dbReference>
<dbReference type="Gene3D" id="2.170.120.20">
    <property type="entry name" value="Ribosomal protein L25, beta domain"/>
    <property type="match status" value="1"/>
</dbReference>
<dbReference type="Gene3D" id="2.40.240.10">
    <property type="entry name" value="Ribosomal Protein L25, Chain P"/>
    <property type="match status" value="1"/>
</dbReference>
<dbReference type="HAMAP" id="MF_01336">
    <property type="entry name" value="Ribosomal_bL25"/>
    <property type="match status" value="1"/>
</dbReference>
<dbReference type="HAMAP" id="MF_01334">
    <property type="entry name" value="Ribosomal_bL25_CTC"/>
    <property type="match status" value="1"/>
</dbReference>
<dbReference type="InterPro" id="IPR020056">
    <property type="entry name" value="Rbsml_bL25/Gln-tRNA_synth_N"/>
</dbReference>
<dbReference type="InterPro" id="IPR011035">
    <property type="entry name" value="Ribosomal_bL25/Gln-tRNA_synth"/>
</dbReference>
<dbReference type="InterPro" id="IPR020057">
    <property type="entry name" value="Ribosomal_bL25_b-dom"/>
</dbReference>
<dbReference type="InterPro" id="IPR037121">
    <property type="entry name" value="Ribosomal_bL25_C"/>
</dbReference>
<dbReference type="InterPro" id="IPR001021">
    <property type="entry name" value="Ribosomal_bL25_long"/>
</dbReference>
<dbReference type="InterPro" id="IPR020055">
    <property type="entry name" value="Ribosomal_bL25_short"/>
</dbReference>
<dbReference type="InterPro" id="IPR029751">
    <property type="entry name" value="Ribosomal_L25_dom"/>
</dbReference>
<dbReference type="InterPro" id="IPR020930">
    <property type="entry name" value="Ribosomal_uL5_bac-type"/>
</dbReference>
<dbReference type="NCBIfam" id="TIGR00731">
    <property type="entry name" value="bL25_bact_ctc"/>
    <property type="match status" value="1"/>
</dbReference>
<dbReference type="NCBIfam" id="NF004128">
    <property type="entry name" value="PRK05618.1-2"/>
    <property type="match status" value="1"/>
</dbReference>
<dbReference type="NCBIfam" id="NF004130">
    <property type="entry name" value="PRK05618.1-5"/>
    <property type="match status" value="1"/>
</dbReference>
<dbReference type="NCBIfam" id="NF004612">
    <property type="entry name" value="PRK05943.1"/>
    <property type="match status" value="1"/>
</dbReference>
<dbReference type="PANTHER" id="PTHR33284">
    <property type="entry name" value="RIBOSOMAL PROTEIN L25/GLN-TRNA SYNTHETASE, ANTI-CODON-BINDING DOMAIN-CONTAINING PROTEIN"/>
    <property type="match status" value="1"/>
</dbReference>
<dbReference type="PANTHER" id="PTHR33284:SF1">
    <property type="entry name" value="RIBOSOMAL PROTEIN L25_GLN-TRNA SYNTHETASE, ANTI-CODON-BINDING DOMAIN-CONTAINING PROTEIN"/>
    <property type="match status" value="1"/>
</dbReference>
<dbReference type="Pfam" id="PF01386">
    <property type="entry name" value="Ribosomal_L25p"/>
    <property type="match status" value="1"/>
</dbReference>
<dbReference type="Pfam" id="PF14693">
    <property type="entry name" value="Ribosomal_TL5_C"/>
    <property type="match status" value="1"/>
</dbReference>
<dbReference type="SUPFAM" id="SSF50715">
    <property type="entry name" value="Ribosomal protein L25-like"/>
    <property type="match status" value="1"/>
</dbReference>
<sequence>MTYEIQASVREAQGTGASRRLRREGQIPGILYGEGQEPVAIAVDHKTVFYALEKESFHTALIKLSLNGETKDVIVRDFQMHPFRREVQHIDFQAVKADQLVRIRVPLHIVNAENSQAVKLQGGRVSLLNTAVEVLALPANIPAFLDLDCAEVVAGDILHLSDIKLPEGVESVSLKRNENLAVATVTGKKR</sequence>
<evidence type="ECO:0000255" key="1">
    <source>
        <dbReference type="HAMAP-Rule" id="MF_01334"/>
    </source>
</evidence>
<evidence type="ECO:0000305" key="2"/>
<reference key="1">
    <citation type="journal article" date="2008" name="J. Bacteriol.">
        <title>Complete genome sequence of Neisseria gonorrhoeae NCCP11945.</title>
        <authorList>
            <person name="Chung G.T."/>
            <person name="Yoo J.S."/>
            <person name="Oh H.B."/>
            <person name="Lee Y.S."/>
            <person name="Cha S.H."/>
            <person name="Kim S.J."/>
            <person name="Yoo C.K."/>
        </authorList>
    </citation>
    <scope>NUCLEOTIDE SEQUENCE [LARGE SCALE GENOMIC DNA]</scope>
    <source>
        <strain>NCCP11945</strain>
    </source>
</reference>
<comment type="function">
    <text evidence="1">This is one of the proteins that binds to the 5S RNA in the ribosome where it forms part of the central protuberance.</text>
</comment>
<comment type="subunit">
    <text evidence="1">Part of the 50S ribosomal subunit; part of the 5S rRNA/L5/L18/L25 subcomplex. Contacts the 5S rRNA. Binds to the 5S rRNA independently of L5 and L18.</text>
</comment>
<comment type="similarity">
    <text evidence="1">Belongs to the bacterial ribosomal protein bL25 family. CTC subfamily.</text>
</comment>